<proteinExistence type="evidence at protein level"/>
<sequence>MSFANMFNKLSGQPESYEKKSLYRFGRTLGAGTYGIVREADCSSGKVAVKIILKRNVRGNERMVYDELDLLQKLNHPHIVHFVDWFESKDKFYIVTQLATGGELFDRICEYGKFTEKDASQTIRQVLDAVNYLHQRNIVHRDLKPENLLYLTRDLDSQLVLADFGIAKMLDNPAEVLTSMAGSFGYAAPEVMLKQGHGKAVDIWSLGVITYTLLCGYSPFRSENLTDLIEECRSGRVVFHERYWKDVSKDAKDFILSLLQVDPAQRPTSEEALKHPWLKGESASDRDLLPEIRAYIARSRLKRGIEIIKLANRIEALKMQEEDEEDIPSAVDVQASEASDKSGLSPFPALSTENSNTHPASTGNGESGGTKKRSLSKIARGAIFREVVLAKVREMKENEEREKVEREARERAHS</sequence>
<evidence type="ECO:0000250" key="1">
    <source>
        <dbReference type="UniProtKB" id="Q63450"/>
    </source>
</evidence>
<evidence type="ECO:0000255" key="2">
    <source>
        <dbReference type="PROSITE-ProRule" id="PRU00159"/>
    </source>
</evidence>
<evidence type="ECO:0000255" key="3">
    <source>
        <dbReference type="PROSITE-ProRule" id="PRU10027"/>
    </source>
</evidence>
<evidence type="ECO:0000256" key="4">
    <source>
        <dbReference type="SAM" id="MobiDB-lite"/>
    </source>
</evidence>
<evidence type="ECO:0000269" key="5">
    <source>
    </source>
</evidence>
<evidence type="ECO:0000269" key="6">
    <source>
    </source>
</evidence>
<evidence type="ECO:0000303" key="7">
    <source>
    </source>
</evidence>
<evidence type="ECO:0000303" key="8">
    <source>
    </source>
</evidence>
<evidence type="ECO:0000303" key="9">
    <source>
    </source>
</evidence>
<evidence type="ECO:0000305" key="10"/>
<organism>
    <name type="scientific">Emericella nidulans (strain FGSC A4 / ATCC 38163 / CBS 112.46 / NRRL 194 / M139)</name>
    <name type="common">Aspergillus nidulans</name>
    <dbReference type="NCBI Taxonomy" id="227321"/>
    <lineage>
        <taxon>Eukaryota</taxon>
        <taxon>Fungi</taxon>
        <taxon>Dikarya</taxon>
        <taxon>Ascomycota</taxon>
        <taxon>Pezizomycotina</taxon>
        <taxon>Eurotiomycetes</taxon>
        <taxon>Eurotiomycetidae</taxon>
        <taxon>Eurotiales</taxon>
        <taxon>Aspergillaceae</taxon>
        <taxon>Aspergillus</taxon>
        <taxon>Aspergillus subgen. Nidulantes</taxon>
    </lineage>
</organism>
<gene>
    <name type="primary">cmkA</name>
    <name type="ORF">AN2412</name>
</gene>
<accession>Q00771</accession>
<accession>C8VNX3</accession>
<accession>Q5BAL8</accession>
<feature type="chain" id="PRO_0000086087" description="Calcium/calmodulin-dependent protein kinase cmkA">
    <location>
        <begin position="1"/>
        <end position="414"/>
    </location>
</feature>
<feature type="domain" description="Protein kinase" evidence="2">
    <location>
        <begin position="23"/>
        <end position="278"/>
    </location>
</feature>
<feature type="region of interest" description="Autoinhibitory domain" evidence="1">
    <location>
        <begin position="278"/>
        <end position="314"/>
    </location>
</feature>
<feature type="region of interest" description="Calmodulin-binding" evidence="1">
    <location>
        <begin position="293"/>
        <end position="315"/>
    </location>
</feature>
<feature type="region of interest" description="Disordered" evidence="4">
    <location>
        <begin position="320"/>
        <end position="375"/>
    </location>
</feature>
<feature type="region of interest" description="Disordered" evidence="4">
    <location>
        <begin position="394"/>
        <end position="414"/>
    </location>
</feature>
<feature type="compositionally biased region" description="Polar residues" evidence="4">
    <location>
        <begin position="351"/>
        <end position="364"/>
    </location>
</feature>
<feature type="active site" description="Proton acceptor" evidence="2 3">
    <location>
        <position position="142"/>
    </location>
</feature>
<feature type="binding site" evidence="2">
    <location>
        <begin position="29"/>
        <end position="37"/>
    </location>
    <ligand>
        <name>ATP</name>
        <dbReference type="ChEBI" id="CHEBI:30616"/>
    </ligand>
</feature>
<feature type="binding site" evidence="2">
    <location>
        <position position="50"/>
    </location>
    <ligand>
        <name>ATP</name>
        <dbReference type="ChEBI" id="CHEBI:30616"/>
    </ligand>
</feature>
<feature type="mutagenesis site" description="Loss of kinase activity." evidence="6">
    <original>K</original>
    <variation>M</variation>
    <location>
        <position position="50"/>
    </location>
</feature>
<feature type="sequence conflict" description="In Ref. 1; AAB97502 and 2; AAD22581." evidence="10" ref="1 2">
    <original>A</original>
    <variation>R</variation>
    <location>
        <position position="408"/>
    </location>
</feature>
<comment type="function">
    <text evidence="5 6">Calcium/calmodulin-dependent protein kinase (PubMed:2835766). Required in nuclear division cycle for progression from G2 to mitosis. Required for hyphal growth (PubMed:8898358).</text>
</comment>
<comment type="catalytic activity">
    <reaction evidence="5 6">
        <text>L-seryl-[protein] + ATP = O-phospho-L-seryl-[protein] + ADP + H(+)</text>
        <dbReference type="Rhea" id="RHEA:17989"/>
        <dbReference type="Rhea" id="RHEA-COMP:9863"/>
        <dbReference type="Rhea" id="RHEA-COMP:11604"/>
        <dbReference type="ChEBI" id="CHEBI:15378"/>
        <dbReference type="ChEBI" id="CHEBI:29999"/>
        <dbReference type="ChEBI" id="CHEBI:30616"/>
        <dbReference type="ChEBI" id="CHEBI:83421"/>
        <dbReference type="ChEBI" id="CHEBI:456216"/>
        <dbReference type="EC" id="2.7.11.17"/>
    </reaction>
</comment>
<comment type="catalytic activity">
    <reaction evidence="5 6">
        <text>L-threonyl-[protein] + ATP = O-phospho-L-threonyl-[protein] + ADP + H(+)</text>
        <dbReference type="Rhea" id="RHEA:46608"/>
        <dbReference type="Rhea" id="RHEA-COMP:11060"/>
        <dbReference type="Rhea" id="RHEA-COMP:11605"/>
        <dbReference type="ChEBI" id="CHEBI:15378"/>
        <dbReference type="ChEBI" id="CHEBI:30013"/>
        <dbReference type="ChEBI" id="CHEBI:30616"/>
        <dbReference type="ChEBI" id="CHEBI:61977"/>
        <dbReference type="ChEBI" id="CHEBI:456216"/>
        <dbReference type="EC" id="2.7.11.17"/>
    </reaction>
</comment>
<comment type="activity regulation">
    <text evidence="6 10">Activated by Ca(2+)/calmodulin (PubMed:8898358). Binding of calmodulin may relieve intrasteric autoinhibition (Probable).</text>
</comment>
<comment type="subunit">
    <text evidence="5">Monomer.</text>
</comment>
<comment type="domain">
    <text evidence="1">The autoinhibitory domain overlaps with the calmodulin binding region and interacts in the inactive folded state with the catalytic domain as a pseudosubstrate.</text>
</comment>
<comment type="PTM">
    <text evidence="5">Autophosphorylated in a calcium/calmodulin-dependent manner.</text>
</comment>
<comment type="disruption phenotype">
    <text evidence="6">Spores arrest with a single nucleus and fail to extend a germ tube.</text>
</comment>
<comment type="similarity">
    <text evidence="10">Belongs to the protein kinase superfamily. CAMK Ser/Thr protein kinase family. CaMK subfamily.</text>
</comment>
<comment type="sequence caution" evidence="10">
    <conflict type="erroneous gene model prediction">
        <sequence resource="EMBL-CDS" id="EAA64523"/>
    </conflict>
</comment>
<keyword id="KW-0067">ATP-binding</keyword>
<keyword id="KW-0112">Calmodulin-binding</keyword>
<keyword id="KW-0131">Cell cycle</keyword>
<keyword id="KW-0132">Cell division</keyword>
<keyword id="KW-0418">Kinase</keyword>
<keyword id="KW-0547">Nucleotide-binding</keyword>
<keyword id="KW-0597">Phosphoprotein</keyword>
<keyword id="KW-1185">Reference proteome</keyword>
<keyword id="KW-0723">Serine/threonine-protein kinase</keyword>
<keyword id="KW-0808">Transferase</keyword>
<protein>
    <recommendedName>
        <fullName evidence="10">Calcium/calmodulin-dependent protein kinase cmkA</fullName>
        <shortName>CMPK</shortName>
        <ecNumber evidence="5 6">2.7.11.17</ecNumber>
    </recommendedName>
    <alternativeName>
        <fullName evidence="8 9">Multifunctional calcium/calmodulin-dependent protein kinase</fullName>
        <shortName evidence="8">ACMPK</shortName>
        <shortName evidence="9">CaMK</shortName>
    </alternativeName>
</protein>
<reference key="1">
    <citation type="journal article" date="1992" name="Gene">
        <title>Cloning and sequence determination of a cDNA encoding Aspergillus nidulans calmodulin-dependent multifunctional protein kinase.</title>
        <authorList>
            <person name="Kornstein L.B."/>
            <person name="Gaiso M.L."/>
            <person name="Hammell R.L."/>
            <person name="Bartelt D.C."/>
        </authorList>
    </citation>
    <scope>NUCLEOTIDE SEQUENCE [MRNA]</scope>
</reference>
<reference key="2">
    <citation type="submission" date="1998-03" db="EMBL/GenBank/DDBJ databases">
        <title>Structure of the cmkA gene encoding a CaMKII homolog in Emericella (Aspergillus) nidulans.</title>
        <authorList>
            <person name="Subbaramaiah K."/>
            <person name="Greene V."/>
            <person name="Bartelt D.C."/>
        </authorList>
    </citation>
    <scope>NUCLEOTIDE SEQUENCE [GENOMIC DNA]</scope>
    <source>
        <strain>R153</strain>
    </source>
</reference>
<reference key="3">
    <citation type="journal article" date="2005" name="Nature">
        <title>Sequencing of Aspergillus nidulans and comparative analysis with A. fumigatus and A. oryzae.</title>
        <authorList>
            <person name="Galagan J.E."/>
            <person name="Calvo S.E."/>
            <person name="Cuomo C."/>
            <person name="Ma L.-J."/>
            <person name="Wortman J.R."/>
            <person name="Batzoglou S."/>
            <person name="Lee S.-I."/>
            <person name="Bastuerkmen M."/>
            <person name="Spevak C.C."/>
            <person name="Clutterbuck J."/>
            <person name="Kapitonov V."/>
            <person name="Jurka J."/>
            <person name="Scazzocchio C."/>
            <person name="Farman M.L."/>
            <person name="Butler J."/>
            <person name="Purcell S."/>
            <person name="Harris S."/>
            <person name="Braus G.H."/>
            <person name="Draht O."/>
            <person name="Busch S."/>
            <person name="D'Enfert C."/>
            <person name="Bouchier C."/>
            <person name="Goldman G.H."/>
            <person name="Bell-Pedersen D."/>
            <person name="Griffiths-Jones S."/>
            <person name="Doonan J.H."/>
            <person name="Yu J."/>
            <person name="Vienken K."/>
            <person name="Pain A."/>
            <person name="Freitag M."/>
            <person name="Selker E.U."/>
            <person name="Archer D.B."/>
            <person name="Penalva M.A."/>
            <person name="Oakley B.R."/>
            <person name="Momany M."/>
            <person name="Tanaka T."/>
            <person name="Kumagai T."/>
            <person name="Asai K."/>
            <person name="Machida M."/>
            <person name="Nierman W.C."/>
            <person name="Denning D.W."/>
            <person name="Caddick M.X."/>
            <person name="Hynes M."/>
            <person name="Paoletti M."/>
            <person name="Fischer R."/>
            <person name="Miller B.L."/>
            <person name="Dyer P.S."/>
            <person name="Sachs M.S."/>
            <person name="Osmani S.A."/>
            <person name="Birren B.W."/>
        </authorList>
    </citation>
    <scope>NUCLEOTIDE SEQUENCE [LARGE SCALE GENOMIC DNA]</scope>
    <source>
        <strain>FGSC A4 / ATCC 38163 / CBS 112.46 / NRRL 194 / M139</strain>
    </source>
</reference>
<reference key="4">
    <citation type="journal article" date="2009" name="Fungal Genet. Biol.">
        <title>The 2008 update of the Aspergillus nidulans genome annotation: a community effort.</title>
        <authorList>
            <person name="Wortman J.R."/>
            <person name="Gilsenan J.M."/>
            <person name="Joardar V."/>
            <person name="Deegan J."/>
            <person name="Clutterbuck J."/>
            <person name="Andersen M.R."/>
            <person name="Archer D."/>
            <person name="Bencina M."/>
            <person name="Braus G."/>
            <person name="Coutinho P."/>
            <person name="von Dohren H."/>
            <person name="Doonan J."/>
            <person name="Driessen A.J."/>
            <person name="Durek P."/>
            <person name="Espeso E."/>
            <person name="Fekete E."/>
            <person name="Flipphi M."/>
            <person name="Estrada C.G."/>
            <person name="Geysens S."/>
            <person name="Goldman G."/>
            <person name="de Groot P.W."/>
            <person name="Hansen K."/>
            <person name="Harris S.D."/>
            <person name="Heinekamp T."/>
            <person name="Helmstaedt K."/>
            <person name="Henrissat B."/>
            <person name="Hofmann G."/>
            <person name="Homan T."/>
            <person name="Horio T."/>
            <person name="Horiuchi H."/>
            <person name="James S."/>
            <person name="Jones M."/>
            <person name="Karaffa L."/>
            <person name="Karanyi Z."/>
            <person name="Kato M."/>
            <person name="Keller N."/>
            <person name="Kelly D.E."/>
            <person name="Kiel J.A."/>
            <person name="Kim J.M."/>
            <person name="van der Klei I.J."/>
            <person name="Klis F.M."/>
            <person name="Kovalchuk A."/>
            <person name="Krasevec N."/>
            <person name="Kubicek C.P."/>
            <person name="Liu B."/>
            <person name="Maccabe A."/>
            <person name="Meyer V."/>
            <person name="Mirabito P."/>
            <person name="Miskei M."/>
            <person name="Mos M."/>
            <person name="Mullins J."/>
            <person name="Nelson D.R."/>
            <person name="Nielsen J."/>
            <person name="Oakley B.R."/>
            <person name="Osmani S.A."/>
            <person name="Pakula T."/>
            <person name="Paszewski A."/>
            <person name="Paulsen I."/>
            <person name="Pilsyk S."/>
            <person name="Pocsi I."/>
            <person name="Punt P.J."/>
            <person name="Ram A.F."/>
            <person name="Ren Q."/>
            <person name="Robellet X."/>
            <person name="Robson G."/>
            <person name="Seiboth B."/>
            <person name="van Solingen P."/>
            <person name="Specht T."/>
            <person name="Sun J."/>
            <person name="Taheri-Talesh N."/>
            <person name="Takeshita N."/>
            <person name="Ussery D."/>
            <person name="vanKuyk P.A."/>
            <person name="Visser H."/>
            <person name="van de Vondervoort P.J."/>
            <person name="de Vries R.P."/>
            <person name="Walton J."/>
            <person name="Xiang X."/>
            <person name="Xiong Y."/>
            <person name="Zeng A.P."/>
            <person name="Brandt B.W."/>
            <person name="Cornell M.J."/>
            <person name="van den Hondel C.A."/>
            <person name="Visser J."/>
            <person name="Oliver S.G."/>
            <person name="Turner G."/>
        </authorList>
    </citation>
    <scope>GENOME REANNOTATION</scope>
    <source>
        <strain>FGSC A4 / ATCC 38163 / CBS 112.46 / NRRL 194 / M139</strain>
    </source>
</reference>
<reference key="5">
    <citation type="journal article" date="1988" name="Proc. Natl. Acad. Sci. U.S.A.">
        <title>Calmodulin-dependent multifunctional protein kinase in Aspergillus nidulans.</title>
        <authorList>
            <person name="Bartelt D.C."/>
            <person name="Fidel S."/>
            <person name="Farber L.H."/>
            <person name="Wolff D.J."/>
            <person name="Hammell R.L."/>
        </authorList>
    </citation>
    <scope>FUNCTION</scope>
    <scope>CATALYTIC ACTIVITY</scope>
    <scope>SUBUNIT</scope>
    <scope>AUTOPHOSPHORYLATION</scope>
    <source>
        <strain evidence="7">R153</strain>
    </source>
</reference>
<reference key="6">
    <citation type="journal article" date="1996" name="Mol. Biol. Cell">
        <title>Ca(2+)/calmodulin-dependent kinase is essential for both growth and nuclear division in Aspergillus nidulans.</title>
        <authorList>
            <person name="Dayton J.S."/>
            <person name="Means A.R."/>
        </authorList>
    </citation>
    <scope>FUNCTION</scope>
    <scope>CATALYTIC ACTIVITY</scope>
    <scope>ACTIVITY REGULATION</scope>
    <scope>DISRUPTION PHENOTYPE</scope>
    <scope>MUTAGENESIS OF LYS-50</scope>
</reference>
<name>KCC1A_EMENI</name>
<dbReference type="EC" id="2.7.11.17" evidence="5 6"/>
<dbReference type="EMBL" id="M74120">
    <property type="protein sequence ID" value="AAB97502.1"/>
    <property type="molecule type" value="mRNA"/>
</dbReference>
<dbReference type="EMBL" id="AF054580">
    <property type="protein sequence ID" value="AAD22581.1"/>
    <property type="molecule type" value="Genomic_DNA"/>
</dbReference>
<dbReference type="EMBL" id="AACD01000039">
    <property type="protein sequence ID" value="EAA64523.1"/>
    <property type="status" value="ALT_SEQ"/>
    <property type="molecule type" value="Genomic_DNA"/>
</dbReference>
<dbReference type="EMBL" id="BN001307">
    <property type="protein sequence ID" value="CBF86796.1"/>
    <property type="molecule type" value="Genomic_DNA"/>
</dbReference>
<dbReference type="PIR" id="JN0323">
    <property type="entry name" value="JN0323"/>
</dbReference>
<dbReference type="RefSeq" id="XP_660016.1">
    <property type="nucleotide sequence ID" value="XM_654924.1"/>
</dbReference>
<dbReference type="SMR" id="Q00771"/>
<dbReference type="FunCoup" id="Q00771">
    <property type="interactions" value="594"/>
</dbReference>
<dbReference type="STRING" id="227321.Q00771"/>
<dbReference type="EnsemblFungi" id="CBF86796">
    <property type="protein sequence ID" value="CBF86796"/>
    <property type="gene ID" value="ANIA_02412"/>
</dbReference>
<dbReference type="KEGG" id="ani:ANIA_02412"/>
<dbReference type="VEuPathDB" id="FungiDB:AN2412"/>
<dbReference type="eggNOG" id="KOG0032">
    <property type="taxonomic scope" value="Eukaryota"/>
</dbReference>
<dbReference type="HOGENOM" id="CLU_000288_63_0_1"/>
<dbReference type="InParanoid" id="Q00771"/>
<dbReference type="OMA" id="HDWFESR"/>
<dbReference type="OrthoDB" id="40902at2759"/>
<dbReference type="BRENDA" id="2.7.11.17">
    <property type="organism ID" value="517"/>
</dbReference>
<dbReference type="Proteomes" id="UP000000560">
    <property type="component" value="Chromosome VII"/>
</dbReference>
<dbReference type="GO" id="GO:0005737">
    <property type="term" value="C:cytoplasm"/>
    <property type="evidence" value="ECO:0000318"/>
    <property type="project" value="GO_Central"/>
</dbReference>
<dbReference type="GO" id="GO:0005829">
    <property type="term" value="C:cytosol"/>
    <property type="evidence" value="ECO:0000314"/>
    <property type="project" value="AspGD"/>
</dbReference>
<dbReference type="GO" id="GO:0005524">
    <property type="term" value="F:ATP binding"/>
    <property type="evidence" value="ECO:0007669"/>
    <property type="project" value="UniProtKB-KW"/>
</dbReference>
<dbReference type="GO" id="GO:0004683">
    <property type="term" value="F:calcium/calmodulin-dependent protein kinase activity"/>
    <property type="evidence" value="ECO:0000314"/>
    <property type="project" value="AspGD"/>
</dbReference>
<dbReference type="GO" id="GO:0005516">
    <property type="term" value="F:calmodulin binding"/>
    <property type="evidence" value="ECO:0007669"/>
    <property type="project" value="UniProtKB-KW"/>
</dbReference>
<dbReference type="GO" id="GO:0106310">
    <property type="term" value="F:protein serine kinase activity"/>
    <property type="evidence" value="ECO:0007669"/>
    <property type="project" value="RHEA"/>
</dbReference>
<dbReference type="GO" id="GO:0051301">
    <property type="term" value="P:cell division"/>
    <property type="evidence" value="ECO:0007669"/>
    <property type="project" value="UniProtKB-KW"/>
</dbReference>
<dbReference type="GO" id="GO:0034599">
    <property type="term" value="P:cellular response to oxidative stress"/>
    <property type="evidence" value="ECO:0000318"/>
    <property type="project" value="GO_Central"/>
</dbReference>
<dbReference type="GO" id="GO:0000086">
    <property type="term" value="P:G2/M transition of mitotic cell cycle"/>
    <property type="evidence" value="ECO:0000315"/>
    <property type="project" value="AspGD"/>
</dbReference>
<dbReference type="GO" id="GO:0035556">
    <property type="term" value="P:intracellular signal transduction"/>
    <property type="evidence" value="ECO:0000314"/>
    <property type="project" value="UniProtKB"/>
</dbReference>
<dbReference type="GO" id="GO:1904361">
    <property type="term" value="P:positive regulation of spore germination"/>
    <property type="evidence" value="ECO:0000315"/>
    <property type="project" value="UniProtKB"/>
</dbReference>
<dbReference type="GO" id="GO:0007165">
    <property type="term" value="P:signal transduction"/>
    <property type="evidence" value="ECO:0000318"/>
    <property type="project" value="GO_Central"/>
</dbReference>
<dbReference type="CDD" id="cd05117">
    <property type="entry name" value="STKc_CAMK"/>
    <property type="match status" value="1"/>
</dbReference>
<dbReference type="FunFam" id="1.10.510.10:FF:000449">
    <property type="entry name" value="Calcium/calmodulin-dependent protein kinase"/>
    <property type="match status" value="1"/>
</dbReference>
<dbReference type="FunFam" id="3.30.200.20:FF:000278">
    <property type="entry name" value="Calcium/calmodulin-dependent protein kinase II"/>
    <property type="match status" value="1"/>
</dbReference>
<dbReference type="Gene3D" id="3.30.200.20">
    <property type="entry name" value="Phosphorylase Kinase, domain 1"/>
    <property type="match status" value="1"/>
</dbReference>
<dbReference type="Gene3D" id="1.10.510.10">
    <property type="entry name" value="Transferase(Phosphotransferase) domain 1"/>
    <property type="match status" value="1"/>
</dbReference>
<dbReference type="InterPro" id="IPR011009">
    <property type="entry name" value="Kinase-like_dom_sf"/>
</dbReference>
<dbReference type="InterPro" id="IPR000719">
    <property type="entry name" value="Prot_kinase_dom"/>
</dbReference>
<dbReference type="InterPro" id="IPR017441">
    <property type="entry name" value="Protein_kinase_ATP_BS"/>
</dbReference>
<dbReference type="InterPro" id="IPR008271">
    <property type="entry name" value="Ser/Thr_kinase_AS"/>
</dbReference>
<dbReference type="PANTHER" id="PTHR24347">
    <property type="entry name" value="SERINE/THREONINE-PROTEIN KINASE"/>
    <property type="match status" value="1"/>
</dbReference>
<dbReference type="Pfam" id="PF00069">
    <property type="entry name" value="Pkinase"/>
    <property type="match status" value="1"/>
</dbReference>
<dbReference type="SMART" id="SM00220">
    <property type="entry name" value="S_TKc"/>
    <property type="match status" value="1"/>
</dbReference>
<dbReference type="SUPFAM" id="SSF56112">
    <property type="entry name" value="Protein kinase-like (PK-like)"/>
    <property type="match status" value="1"/>
</dbReference>
<dbReference type="PROSITE" id="PS00107">
    <property type="entry name" value="PROTEIN_KINASE_ATP"/>
    <property type="match status" value="1"/>
</dbReference>
<dbReference type="PROSITE" id="PS50011">
    <property type="entry name" value="PROTEIN_KINASE_DOM"/>
    <property type="match status" value="1"/>
</dbReference>
<dbReference type="PROSITE" id="PS00108">
    <property type="entry name" value="PROTEIN_KINASE_ST"/>
    <property type="match status" value="1"/>
</dbReference>